<name>SBTXB_SOYBN</name>
<accession>P86548</accession>
<reference evidence="7" key="1">
    <citation type="journal article" date="2008" name="Toxicon">
        <title>SBTX, a new toxic protein distinct from soyatoxin and other toxic soybean [Glycine max] proteins, and its inhibitory effect on Cercospora sojina growth.</title>
        <authorList>
            <person name="Vasconcelos I.M."/>
            <person name="Morais J.K."/>
            <person name="Siebra E.A."/>
            <person name="Carlini C.R."/>
            <person name="Sousa D.O."/>
            <person name="Beltramini L.M."/>
            <person name="Melo V.M."/>
            <person name="Oliveira J.T."/>
        </authorList>
    </citation>
    <scope>PROTEIN SEQUENCE</scope>
    <scope>FUNCTION</scope>
    <scope>BIOPHYSICOCHEMICAL PROPERTIES</scope>
    <scope>SUBUNIT</scope>
    <scope>GLYCOSYLATION</scope>
    <scope>TOXIC DOSE</scope>
    <source>
        <strain evidence="1">cv. BR-10</strain>
        <tissue evidence="1">Seed</tissue>
    </source>
</reference>
<reference evidence="7" key="2">
    <citation type="submission" date="2010-03" db="UniProtKB">
        <authorList>
            <person name="Oliveira H.D."/>
        </authorList>
    </citation>
    <scope>TISSUE SPECIFICITY</scope>
    <scope>INDUCTION</scope>
</reference>
<reference key="3">
    <citation type="journal article" date="2010" name="J. Agric. Food Chem.">
        <title>Soybean toxin (SBTX), a protein from soybeans that inhibits the life cycle of plant and human pathogenic fungi.</title>
        <authorList>
            <person name="Morais J.K."/>
            <person name="Gomes V.M."/>
            <person name="Oliveira J.T."/>
            <person name="Santos I.S."/>
            <person name="Da Cunha M."/>
            <person name="Oliveira H.D."/>
            <person name="Oliveira H.P."/>
            <person name="Sousa D.O."/>
            <person name="Vasconcelos I.M."/>
        </authorList>
    </citation>
    <scope>PARTIAL PROTEIN SEQUENCE</scope>
    <scope>FUNCTION</scope>
    <scope>TOXIC DOSE</scope>
    <source>
        <tissue evidence="6">Seed</tissue>
    </source>
</reference>
<reference key="4">
    <citation type="journal article" date="2013" name="PLoS ONE">
        <title>Soybean toxin (SBTX) impairs fungal growth by interfering with molecular transport, carbohydrate/amino acid metabolism and drug/stress responses.</title>
        <authorList>
            <person name="Morais J.K."/>
            <person name="Bader O."/>
            <person name="Weig M."/>
            <person name="Oliveira J.T."/>
            <person name="Arantes M.R."/>
            <person name="Gomes V.M."/>
            <person name="Da Cunha M."/>
            <person name="Oliveira H.D."/>
            <person name="Sousa D.O."/>
            <person name="Lourencao A.L."/>
            <person name="Vasconcelos I.M."/>
        </authorList>
    </citation>
    <scope>FUNCTION</scope>
</reference>
<feature type="chain" id="PRO_0000395398" description="Soybean toxin 17 kDa chain">
    <location>
        <begin position="1"/>
        <end position="25" status="greater than"/>
    </location>
</feature>
<feature type="non-terminal residue" evidence="5">
    <location>
        <position position="25"/>
    </location>
</feature>
<sequence>PNPKVFFDMTIGGQSAGRIVMEEYA</sequence>
<organism>
    <name type="scientific">Glycine max</name>
    <name type="common">Soybean</name>
    <name type="synonym">Glycine hispida</name>
    <dbReference type="NCBI Taxonomy" id="3847"/>
    <lineage>
        <taxon>Eukaryota</taxon>
        <taxon>Viridiplantae</taxon>
        <taxon>Streptophyta</taxon>
        <taxon>Embryophyta</taxon>
        <taxon>Tracheophyta</taxon>
        <taxon>Spermatophyta</taxon>
        <taxon>Magnoliopsida</taxon>
        <taxon>eudicotyledons</taxon>
        <taxon>Gunneridae</taxon>
        <taxon>Pentapetalae</taxon>
        <taxon>rosids</taxon>
        <taxon>fabids</taxon>
        <taxon>Fabales</taxon>
        <taxon>Fabaceae</taxon>
        <taxon>Papilionoideae</taxon>
        <taxon>50 kb inversion clade</taxon>
        <taxon>NPAAA clade</taxon>
        <taxon>indigoferoid/millettioid clade</taxon>
        <taxon>Phaseoleae</taxon>
        <taxon>Glycine</taxon>
        <taxon>Glycine subgen. Soja</taxon>
    </lineage>
</organism>
<dbReference type="SMR" id="P86548"/>
<dbReference type="InParanoid" id="P86548"/>
<dbReference type="Proteomes" id="UP000008827">
    <property type="component" value="Unplaced"/>
</dbReference>
<dbReference type="GO" id="GO:0090729">
    <property type="term" value="F:toxin activity"/>
    <property type="evidence" value="ECO:0007669"/>
    <property type="project" value="UniProtKB-KW"/>
</dbReference>
<dbReference type="GO" id="GO:0050832">
    <property type="term" value="P:defense response to fungus"/>
    <property type="evidence" value="ECO:0007669"/>
    <property type="project" value="UniProtKB-KW"/>
</dbReference>
<dbReference type="GO" id="GO:0031640">
    <property type="term" value="P:killing of cells of another organism"/>
    <property type="evidence" value="ECO:0007669"/>
    <property type="project" value="UniProtKB-KW"/>
</dbReference>
<keyword id="KW-0929">Antimicrobial</keyword>
<keyword id="KW-0903">Direct protein sequencing</keyword>
<keyword id="KW-1015">Disulfide bond</keyword>
<keyword id="KW-0295">Fungicide</keyword>
<keyword id="KW-0611">Plant defense</keyword>
<keyword id="KW-1185">Reference proteome</keyword>
<keyword id="KW-0800">Toxin</keyword>
<proteinExistence type="evidence at protein level"/>
<protein>
    <recommendedName>
        <fullName evidence="5">Soybean toxin 17 kDa chain</fullName>
        <shortName evidence="5">SBTX 17 kDa chain</shortName>
    </recommendedName>
    <alternativeName>
        <fullName>Cyclophilin-like protein</fullName>
    </alternativeName>
</protein>
<comment type="function">
    <text evidence="1 2 3">Involved in plant defense (PubMed:18328522). Inhibits spore germination in C.sojina, A.niger (at concentrations &gt;50 ug/ml) and P.herguei but not in F.oxysporum and F.solani (PubMed:18328522, PubMed:20831249). Does not inhibit vegetative mycelial growth (PubMed:20831249). Inhibits growth of C.albicans and K.marxiannus but not P.membranifaciens or C.parapsilosis (PubMed:20831249, PubMed:23894655). Probably acts by affecting the cell membrane (PubMed:20831249). Does not have urease, chitinase, beta-1,3-glucanase or hemagglutination activities (PubMed:18328522, PubMed:20831249). Does not inhibit trypsin (PubMed:18328522). Injection into mice produces toxic effects such as dyspnea, tonic-clonic convulsion and death (PubMed:18328522).</text>
</comment>
<comment type="biophysicochemical properties">
    <phDependence>
        <text evidence="1">Activity decreases below pH 5.5 and above pH 8.0.</text>
    </phDependence>
</comment>
<comment type="subunit">
    <text evidence="1">Heterodimer of a 27 kDa subunit and a 17 kDa subunit; disulfide-linked.</text>
</comment>
<comment type="tissue specificity">
    <text evidence="4">Expressed in seeds, leaves, roots and stem (at protein level).</text>
</comment>
<comment type="induction">
    <text evidence="4">In seeds, induced by jasmonate.</text>
</comment>
<comment type="PTM">
    <text evidence="1">SBTX is known to be glycosylated but it is not known which one of its two subunits is modified; contains 5% carbohydrates.</text>
</comment>
<comment type="toxic dose">
    <text evidence="1 2">LD(50) is 5.6 mg/kg by intraperitoneal injection into mice.</text>
</comment>
<comment type="miscellaneous">
    <text evidence="1">On the 2D-gel the determined pI of SBTX is: 8.2, its MW is: 44 kDa.</text>
</comment>
<evidence type="ECO:0000269" key="1">
    <source>
    </source>
</evidence>
<evidence type="ECO:0000269" key="2">
    <source>
    </source>
</evidence>
<evidence type="ECO:0000269" key="3">
    <source>
    </source>
</evidence>
<evidence type="ECO:0000269" key="4">
    <source ref="2"/>
</evidence>
<evidence type="ECO:0000303" key="5">
    <source>
    </source>
</evidence>
<evidence type="ECO:0000303" key="6">
    <source>
    </source>
</evidence>
<evidence type="ECO:0000305" key="7"/>